<comment type="function">
    <text evidence="1">Catalyzes the ATP-dependent amidation of the two carboxylate groups at positions a and c of cobyrinate, using either L-glutamine or ammonia as the nitrogen source.</text>
</comment>
<comment type="catalytic activity">
    <reaction evidence="1">
        <text>cob(II)yrinate + 2 L-glutamine + 2 ATP + 2 H2O = cob(II)yrinate a,c diamide + 2 L-glutamate + 2 ADP + 2 phosphate + 2 H(+)</text>
        <dbReference type="Rhea" id="RHEA:26289"/>
        <dbReference type="ChEBI" id="CHEBI:15377"/>
        <dbReference type="ChEBI" id="CHEBI:15378"/>
        <dbReference type="ChEBI" id="CHEBI:29985"/>
        <dbReference type="ChEBI" id="CHEBI:30616"/>
        <dbReference type="ChEBI" id="CHEBI:43474"/>
        <dbReference type="ChEBI" id="CHEBI:58359"/>
        <dbReference type="ChEBI" id="CHEBI:58537"/>
        <dbReference type="ChEBI" id="CHEBI:58894"/>
        <dbReference type="ChEBI" id="CHEBI:456216"/>
        <dbReference type="EC" id="6.3.5.11"/>
    </reaction>
</comment>
<comment type="cofactor">
    <cofactor evidence="1">
        <name>Mg(2+)</name>
        <dbReference type="ChEBI" id="CHEBI:18420"/>
    </cofactor>
</comment>
<comment type="pathway">
    <text evidence="1">Cofactor biosynthesis; adenosylcobalamin biosynthesis; cob(II)yrinate a,c-diamide from sirohydrochlorin (anaerobic route): step 10/10.</text>
</comment>
<comment type="domain">
    <text evidence="1">Comprises of two domains. The C-terminal domain contains the binding site for glutamine and catalyzes the hydrolysis of this substrate to glutamate and ammonia. The N-terminal domain is anticipated to bind ATP and cobyrinate and catalyzes the ultimate synthesis of the diamide product. The ammonia produced via the glutaminase domain is probably translocated to the adjacent domain via a molecular tunnel, where it reacts with an activated intermediate.</text>
</comment>
<comment type="miscellaneous">
    <text evidence="1">The a and c carboxylates of cobyrinate are activated for nucleophilic attack via formation of a phosphorylated intermediate by ATP. CbiA catalyzes first the amidation of the c-carboxylate, and then that of the a-carboxylate.</text>
</comment>
<comment type="similarity">
    <text evidence="1">Belongs to the CobB/CbiA family.</text>
</comment>
<protein>
    <recommendedName>
        <fullName evidence="1">Cobyrinate a,c-diamide synthase</fullName>
        <ecNumber evidence="1">6.3.5.11</ecNumber>
    </recommendedName>
    <alternativeName>
        <fullName evidence="1">Cobyrinic acid a,c-diamide synthetase</fullName>
    </alternativeName>
</protein>
<name>CBIA_SYNC1</name>
<proteinExistence type="inferred from homology"/>
<dbReference type="EC" id="6.3.5.11" evidence="1"/>
<dbReference type="EMBL" id="CP000142">
    <property type="protein sequence ID" value="ABA87741.1"/>
    <property type="molecule type" value="Genomic_DNA"/>
</dbReference>
<dbReference type="RefSeq" id="WP_011340166.1">
    <property type="nucleotide sequence ID" value="NC_007498.2"/>
</dbReference>
<dbReference type="SMR" id="Q3A7A3"/>
<dbReference type="STRING" id="338963.Pcar_0481"/>
<dbReference type="KEGG" id="pca:Pcar_0481"/>
<dbReference type="eggNOG" id="COG1797">
    <property type="taxonomic scope" value="Bacteria"/>
</dbReference>
<dbReference type="HOGENOM" id="CLU_022752_2_0_7"/>
<dbReference type="OrthoDB" id="9764035at2"/>
<dbReference type="UniPathway" id="UPA00148">
    <property type="reaction ID" value="UER00231"/>
</dbReference>
<dbReference type="Proteomes" id="UP000002534">
    <property type="component" value="Chromosome"/>
</dbReference>
<dbReference type="GO" id="GO:0005524">
    <property type="term" value="F:ATP binding"/>
    <property type="evidence" value="ECO:0007669"/>
    <property type="project" value="UniProtKB-UniRule"/>
</dbReference>
<dbReference type="GO" id="GO:0042242">
    <property type="term" value="F:cobyrinic acid a,c-diamide synthase activity"/>
    <property type="evidence" value="ECO:0007669"/>
    <property type="project" value="UniProtKB-UniRule"/>
</dbReference>
<dbReference type="GO" id="GO:0009236">
    <property type="term" value="P:cobalamin biosynthetic process"/>
    <property type="evidence" value="ECO:0007669"/>
    <property type="project" value="UniProtKB-UniRule"/>
</dbReference>
<dbReference type="CDD" id="cd05388">
    <property type="entry name" value="CobB_N"/>
    <property type="match status" value="1"/>
</dbReference>
<dbReference type="CDD" id="cd03130">
    <property type="entry name" value="GATase1_CobB"/>
    <property type="match status" value="1"/>
</dbReference>
<dbReference type="Gene3D" id="3.40.50.880">
    <property type="match status" value="1"/>
</dbReference>
<dbReference type="Gene3D" id="3.40.50.300">
    <property type="entry name" value="P-loop containing nucleotide triphosphate hydrolases"/>
    <property type="match status" value="2"/>
</dbReference>
<dbReference type="HAMAP" id="MF_00027">
    <property type="entry name" value="CobB_CbiA"/>
    <property type="match status" value="1"/>
</dbReference>
<dbReference type="InterPro" id="IPR004484">
    <property type="entry name" value="CbiA/CobB_synth"/>
</dbReference>
<dbReference type="InterPro" id="IPR029062">
    <property type="entry name" value="Class_I_gatase-like"/>
</dbReference>
<dbReference type="InterPro" id="IPR002586">
    <property type="entry name" value="CobQ/CobB/MinD/ParA_Nub-bd_dom"/>
</dbReference>
<dbReference type="InterPro" id="IPR011698">
    <property type="entry name" value="GATase_3"/>
</dbReference>
<dbReference type="InterPro" id="IPR027417">
    <property type="entry name" value="P-loop_NTPase"/>
</dbReference>
<dbReference type="NCBIfam" id="TIGR00379">
    <property type="entry name" value="cobB"/>
    <property type="match status" value="1"/>
</dbReference>
<dbReference type="NCBIfam" id="NF002204">
    <property type="entry name" value="PRK01077.1"/>
    <property type="match status" value="1"/>
</dbReference>
<dbReference type="PANTHER" id="PTHR43873">
    <property type="entry name" value="COBYRINATE A,C-DIAMIDE SYNTHASE"/>
    <property type="match status" value="1"/>
</dbReference>
<dbReference type="PANTHER" id="PTHR43873:SF1">
    <property type="entry name" value="COBYRINATE A,C-DIAMIDE SYNTHASE"/>
    <property type="match status" value="1"/>
</dbReference>
<dbReference type="Pfam" id="PF01656">
    <property type="entry name" value="CbiA"/>
    <property type="match status" value="1"/>
</dbReference>
<dbReference type="Pfam" id="PF07685">
    <property type="entry name" value="GATase_3"/>
    <property type="match status" value="1"/>
</dbReference>
<dbReference type="SUPFAM" id="SSF52317">
    <property type="entry name" value="Class I glutamine amidotransferase-like"/>
    <property type="match status" value="1"/>
</dbReference>
<dbReference type="SUPFAM" id="SSF52540">
    <property type="entry name" value="P-loop containing nucleoside triphosphate hydrolases"/>
    <property type="match status" value="1"/>
</dbReference>
<dbReference type="PROSITE" id="PS51274">
    <property type="entry name" value="GATASE_COBBQ"/>
    <property type="match status" value="1"/>
</dbReference>
<sequence length="459" mass="49296">MSCPRLVIAGTSSGAGKTSLTLGLTAALRRRGLKVQTFKVGPDFLDPTWLSLASERPCINLDGWMCGERYVRDRFATATADADIAIVEGVMGLFDGADPAAAAGSTAEIARWLDAPVLLVVNAHGMARSLAALVKGYAEFDPDLHLAGVIANRCGSTRHGDWLSEALCAAGMPPLTGTVIRDSLPPLPSRHLGLVTADRQHLTSEALNTLADAVERQLDMPRILDLAEKVPATPGVAATASSTEGRPVRIGMAFDEAFHFYYPDNLQALEDAGATLVRFSPMHDDTLPADLDALLLGGGYPEEYADTLETNQTMRQAVADFAAADRPIYAECGGLMYLSEGIELRDGSRHAMTGALPFATRMLATRKRLGYAEVRHLAHGPFGPAGTCLRGHEFHYSEAIAEPAAPGWQSAWQVSYRRSNKPVAEGYQRGRLFASYVHTHFASRPGAARAFVDFCRGES</sequence>
<reference key="1">
    <citation type="submission" date="2005-10" db="EMBL/GenBank/DDBJ databases">
        <title>Complete sequence of Pelobacter carbinolicus DSM 2380.</title>
        <authorList>
            <person name="Copeland A."/>
            <person name="Lucas S."/>
            <person name="Lapidus A."/>
            <person name="Barry K."/>
            <person name="Detter J.C."/>
            <person name="Glavina T."/>
            <person name="Hammon N."/>
            <person name="Israni S."/>
            <person name="Pitluck S."/>
            <person name="Chertkov O."/>
            <person name="Schmutz J."/>
            <person name="Larimer F."/>
            <person name="Land M."/>
            <person name="Kyrpides N."/>
            <person name="Ivanova N."/>
            <person name="Richardson P."/>
        </authorList>
    </citation>
    <scope>NUCLEOTIDE SEQUENCE [LARGE SCALE GENOMIC DNA]</scope>
    <source>
        <strain>DSM 2380 / NBRC 103641 / GraBd1</strain>
    </source>
</reference>
<keyword id="KW-0067">ATP-binding</keyword>
<keyword id="KW-0169">Cobalamin biosynthesis</keyword>
<keyword id="KW-0315">Glutamine amidotransferase</keyword>
<keyword id="KW-0436">Ligase</keyword>
<keyword id="KW-0460">Magnesium</keyword>
<keyword id="KW-0547">Nucleotide-binding</keyword>
<keyword id="KW-1185">Reference proteome</keyword>
<accession>Q3A7A3</accession>
<evidence type="ECO:0000255" key="1">
    <source>
        <dbReference type="HAMAP-Rule" id="MF_00027"/>
    </source>
</evidence>
<gene>
    <name evidence="1" type="primary">cbiA</name>
    <name type="ordered locus">Pcar_0481</name>
</gene>
<feature type="chain" id="PRO_1000002295" description="Cobyrinate a,c-diamide synthase">
    <location>
        <begin position="1"/>
        <end position="459"/>
    </location>
</feature>
<feature type="domain" description="GATase cobBQ-type" evidence="1">
    <location>
        <begin position="249"/>
        <end position="446"/>
    </location>
</feature>
<feature type="active site" description="Nucleophile" evidence="1">
    <location>
        <position position="332"/>
    </location>
</feature>
<feature type="site" description="Increases nucleophilicity of active site Cys" evidence="1">
    <location>
        <position position="438"/>
    </location>
</feature>
<organism>
    <name type="scientific">Syntrophotalea carbinolica (strain DSM 2380 / NBRC 103641 / GraBd1)</name>
    <name type="common">Pelobacter carbinolicus</name>
    <dbReference type="NCBI Taxonomy" id="338963"/>
    <lineage>
        <taxon>Bacteria</taxon>
        <taxon>Pseudomonadati</taxon>
        <taxon>Thermodesulfobacteriota</taxon>
        <taxon>Desulfuromonadia</taxon>
        <taxon>Desulfuromonadales</taxon>
        <taxon>Syntrophotaleaceae</taxon>
        <taxon>Syntrophotalea</taxon>
    </lineage>
</organism>